<keyword id="KW-0131">Cell cycle</keyword>
<keyword id="KW-0132">Cell division</keyword>
<keyword id="KW-0143">Chaperone</keyword>
<keyword id="KW-0963">Cytoplasm</keyword>
<keyword id="KW-0413">Isomerase</keyword>
<keyword id="KW-0697">Rotamase</keyword>
<name>TIG_CALBD</name>
<reference key="1">
    <citation type="submission" date="2009-01" db="EMBL/GenBank/DDBJ databases">
        <title>Complete sequence of chromosome of Caldicellulosiruptor becscii DSM 6725.</title>
        <authorList>
            <person name="Lucas S."/>
            <person name="Copeland A."/>
            <person name="Lapidus A."/>
            <person name="Glavina del Rio T."/>
            <person name="Tice H."/>
            <person name="Bruce D."/>
            <person name="Goodwin L."/>
            <person name="Pitluck S."/>
            <person name="Sims D."/>
            <person name="Meincke L."/>
            <person name="Brettin T."/>
            <person name="Detter J.C."/>
            <person name="Han C."/>
            <person name="Larimer F."/>
            <person name="Land M."/>
            <person name="Hauser L."/>
            <person name="Kyrpides N."/>
            <person name="Ovchinnikova G."/>
            <person name="Kataeva I."/>
            <person name="Adams M.W.W."/>
        </authorList>
    </citation>
    <scope>NUCLEOTIDE SEQUENCE [LARGE SCALE GENOMIC DNA]</scope>
    <source>
        <strain>ATCC BAA-1888 / DSM 6725 / KCTC 15123 / Z-1320</strain>
    </source>
</reference>
<protein>
    <recommendedName>
        <fullName evidence="1">Trigger factor</fullName>
        <shortName evidence="1">TF</shortName>
        <ecNumber evidence="1">5.2.1.8</ecNumber>
    </recommendedName>
    <alternativeName>
        <fullName evidence="1">PPIase</fullName>
    </alternativeName>
</protein>
<gene>
    <name evidence="1" type="primary">tig</name>
    <name type="ordered locus">Athe_0708</name>
</gene>
<organism>
    <name type="scientific">Caldicellulosiruptor bescii (strain ATCC BAA-1888 / DSM 6725 / KCTC 15123 / Z-1320)</name>
    <name type="common">Anaerocellum thermophilum</name>
    <dbReference type="NCBI Taxonomy" id="521460"/>
    <lineage>
        <taxon>Bacteria</taxon>
        <taxon>Bacillati</taxon>
        <taxon>Bacillota</taxon>
        <taxon>Bacillota incertae sedis</taxon>
        <taxon>Caldicellulosiruptorales</taxon>
        <taxon>Caldicellulosiruptoraceae</taxon>
        <taxon>Caldicellulosiruptor</taxon>
    </lineage>
</organism>
<accession>B9MQ31</accession>
<dbReference type="EC" id="5.2.1.8" evidence="1"/>
<dbReference type="EMBL" id="CP001393">
    <property type="protein sequence ID" value="ACM59823.1"/>
    <property type="molecule type" value="Genomic_DNA"/>
</dbReference>
<dbReference type="RefSeq" id="WP_015907265.1">
    <property type="nucleotide sequence ID" value="NC_012034.1"/>
</dbReference>
<dbReference type="SMR" id="B9MQ31"/>
<dbReference type="STRING" id="521460.Athe_0708"/>
<dbReference type="GeneID" id="31772060"/>
<dbReference type="KEGG" id="ate:Athe_0708"/>
<dbReference type="eggNOG" id="COG0544">
    <property type="taxonomic scope" value="Bacteria"/>
</dbReference>
<dbReference type="HOGENOM" id="CLU_033058_3_2_9"/>
<dbReference type="Proteomes" id="UP000007723">
    <property type="component" value="Chromosome"/>
</dbReference>
<dbReference type="GO" id="GO:0005737">
    <property type="term" value="C:cytoplasm"/>
    <property type="evidence" value="ECO:0007669"/>
    <property type="project" value="UniProtKB-SubCell"/>
</dbReference>
<dbReference type="GO" id="GO:0003755">
    <property type="term" value="F:peptidyl-prolyl cis-trans isomerase activity"/>
    <property type="evidence" value="ECO:0007669"/>
    <property type="project" value="UniProtKB-UniRule"/>
</dbReference>
<dbReference type="GO" id="GO:0044183">
    <property type="term" value="F:protein folding chaperone"/>
    <property type="evidence" value="ECO:0007669"/>
    <property type="project" value="TreeGrafter"/>
</dbReference>
<dbReference type="GO" id="GO:0043022">
    <property type="term" value="F:ribosome binding"/>
    <property type="evidence" value="ECO:0007669"/>
    <property type="project" value="TreeGrafter"/>
</dbReference>
<dbReference type="GO" id="GO:0051083">
    <property type="term" value="P:'de novo' cotranslational protein folding"/>
    <property type="evidence" value="ECO:0007669"/>
    <property type="project" value="TreeGrafter"/>
</dbReference>
<dbReference type="GO" id="GO:0051301">
    <property type="term" value="P:cell division"/>
    <property type="evidence" value="ECO:0007669"/>
    <property type="project" value="UniProtKB-KW"/>
</dbReference>
<dbReference type="GO" id="GO:0061077">
    <property type="term" value="P:chaperone-mediated protein folding"/>
    <property type="evidence" value="ECO:0007669"/>
    <property type="project" value="TreeGrafter"/>
</dbReference>
<dbReference type="GO" id="GO:0015031">
    <property type="term" value="P:protein transport"/>
    <property type="evidence" value="ECO:0007669"/>
    <property type="project" value="UniProtKB-UniRule"/>
</dbReference>
<dbReference type="GO" id="GO:0043335">
    <property type="term" value="P:protein unfolding"/>
    <property type="evidence" value="ECO:0007669"/>
    <property type="project" value="TreeGrafter"/>
</dbReference>
<dbReference type="FunFam" id="3.10.50.40:FF:000001">
    <property type="entry name" value="Trigger factor"/>
    <property type="match status" value="1"/>
</dbReference>
<dbReference type="Gene3D" id="3.10.50.40">
    <property type="match status" value="1"/>
</dbReference>
<dbReference type="Gene3D" id="3.30.70.1050">
    <property type="entry name" value="Trigger factor ribosome-binding domain"/>
    <property type="match status" value="1"/>
</dbReference>
<dbReference type="Gene3D" id="1.10.3120.10">
    <property type="entry name" value="Trigger factor, C-terminal domain"/>
    <property type="match status" value="1"/>
</dbReference>
<dbReference type="HAMAP" id="MF_00303">
    <property type="entry name" value="Trigger_factor_Tig"/>
    <property type="match status" value="1"/>
</dbReference>
<dbReference type="InterPro" id="IPR046357">
    <property type="entry name" value="PPIase_dom_sf"/>
</dbReference>
<dbReference type="InterPro" id="IPR001179">
    <property type="entry name" value="PPIase_FKBP_dom"/>
</dbReference>
<dbReference type="InterPro" id="IPR005215">
    <property type="entry name" value="Trig_fac"/>
</dbReference>
<dbReference type="InterPro" id="IPR008880">
    <property type="entry name" value="Trigger_fac_C"/>
</dbReference>
<dbReference type="InterPro" id="IPR037041">
    <property type="entry name" value="Trigger_fac_C_sf"/>
</dbReference>
<dbReference type="InterPro" id="IPR008881">
    <property type="entry name" value="Trigger_fac_ribosome-bd_bac"/>
</dbReference>
<dbReference type="InterPro" id="IPR036611">
    <property type="entry name" value="Trigger_fac_ribosome-bd_sf"/>
</dbReference>
<dbReference type="InterPro" id="IPR027304">
    <property type="entry name" value="Trigger_fact/SurA_dom_sf"/>
</dbReference>
<dbReference type="NCBIfam" id="TIGR00115">
    <property type="entry name" value="tig"/>
    <property type="match status" value="1"/>
</dbReference>
<dbReference type="PANTHER" id="PTHR30560">
    <property type="entry name" value="TRIGGER FACTOR CHAPERONE AND PEPTIDYL-PROLYL CIS/TRANS ISOMERASE"/>
    <property type="match status" value="1"/>
</dbReference>
<dbReference type="PANTHER" id="PTHR30560:SF3">
    <property type="entry name" value="TRIGGER FACTOR-LIKE PROTEIN TIG, CHLOROPLASTIC"/>
    <property type="match status" value="1"/>
</dbReference>
<dbReference type="Pfam" id="PF00254">
    <property type="entry name" value="FKBP_C"/>
    <property type="match status" value="1"/>
</dbReference>
<dbReference type="Pfam" id="PF05698">
    <property type="entry name" value="Trigger_C"/>
    <property type="match status" value="1"/>
</dbReference>
<dbReference type="Pfam" id="PF05697">
    <property type="entry name" value="Trigger_N"/>
    <property type="match status" value="1"/>
</dbReference>
<dbReference type="PIRSF" id="PIRSF003095">
    <property type="entry name" value="Trigger_factor"/>
    <property type="match status" value="1"/>
</dbReference>
<dbReference type="SUPFAM" id="SSF54534">
    <property type="entry name" value="FKBP-like"/>
    <property type="match status" value="1"/>
</dbReference>
<dbReference type="SUPFAM" id="SSF109998">
    <property type="entry name" value="Triger factor/SurA peptide-binding domain-like"/>
    <property type="match status" value="1"/>
</dbReference>
<dbReference type="SUPFAM" id="SSF102735">
    <property type="entry name" value="Trigger factor ribosome-binding domain"/>
    <property type="match status" value="1"/>
</dbReference>
<dbReference type="PROSITE" id="PS50059">
    <property type="entry name" value="FKBP_PPIASE"/>
    <property type="match status" value="1"/>
</dbReference>
<sequence length="438" mass="50844">MEFKIEKKGTNKAIIEVEVEAEKFEEGLQKSYLKNAKYFKIPGFRPGKAPRSLIERAYGEEVFYDDAIDYVLNETYPKVIEESKLEVVSRPEVDIVQVGKGKSFIYKAEVYVKPEFELGQYKGVEITKIEYPVAEEEVEHELEHLREENARFVPVERPVENGDIVTIDFEGFVDGEPINGGSAKDYELTIGSNTFIPGFEEQLIGMNKGEEKEIEVTFPEDYQEPSLAGKKATFKVKVKDIKVKELPELDDEFAKDVSEFETLEELKANIRNRIREKNDKRAKDEMIDAILEKIAQNTSIDIPEPMIENQINYYVEDVARNLQYFGMTYERYLQAIGKTDKEFRSQFRERAEKAVRNNLILEKIAKVENIQATEEELQKELERLAKMYNLEVDKLKERLSEDDIEYIKEGIILNKAIDFIYENAKIISEDNQGENQEN</sequence>
<evidence type="ECO:0000255" key="1">
    <source>
        <dbReference type="HAMAP-Rule" id="MF_00303"/>
    </source>
</evidence>
<proteinExistence type="inferred from homology"/>
<comment type="function">
    <text evidence="1">Involved in protein export. Acts as a chaperone by maintaining the newly synthesized protein in an open conformation. Functions as a peptidyl-prolyl cis-trans isomerase.</text>
</comment>
<comment type="catalytic activity">
    <reaction evidence="1">
        <text>[protein]-peptidylproline (omega=180) = [protein]-peptidylproline (omega=0)</text>
        <dbReference type="Rhea" id="RHEA:16237"/>
        <dbReference type="Rhea" id="RHEA-COMP:10747"/>
        <dbReference type="Rhea" id="RHEA-COMP:10748"/>
        <dbReference type="ChEBI" id="CHEBI:83833"/>
        <dbReference type="ChEBI" id="CHEBI:83834"/>
        <dbReference type="EC" id="5.2.1.8"/>
    </reaction>
</comment>
<comment type="subcellular location">
    <subcellularLocation>
        <location>Cytoplasm</location>
    </subcellularLocation>
    <text evidence="1">About half TF is bound to the ribosome near the polypeptide exit tunnel while the other half is free in the cytoplasm.</text>
</comment>
<comment type="domain">
    <text evidence="1">Consists of 3 domains; the N-terminus binds the ribosome, the middle domain has PPIase activity, while the C-terminus has intrinsic chaperone activity on its own.</text>
</comment>
<comment type="similarity">
    <text evidence="1">Belongs to the FKBP-type PPIase family. Tig subfamily.</text>
</comment>
<feature type="chain" id="PRO_1000198137" description="Trigger factor">
    <location>
        <begin position="1"/>
        <end position="438"/>
    </location>
</feature>
<feature type="domain" description="PPIase FKBP-type" evidence="1">
    <location>
        <begin position="162"/>
        <end position="247"/>
    </location>
</feature>